<sequence length="380" mass="41172">MSNTAGQVIKCRAAVAWEAGKPLVIEEVEVAPPQAGEVRLKILFTSLCHTDVYFWEAKGQTPLFPRIFGHEAGGIVESVGEGVTHLKPGDHALPVFTGECGECPHCKSEESNMCNLLRINTDRGVMINDNKSRFSIKGQPVHHFVGTSTFSEYTVVHAGCVAKINPDAPLDKVCILSCGICTGLGATVNVAKPKPGSSVAIFGLGAVGLAAAEGARMSGASRIIGVDLVSSRFELAKKFGVNEFVNPKDHDKPVQQVIAEMTDGGVDRAVECTGSIQAMISAFECVHDGWGVAVLVGVPKKDDAFKTHPMNFLNERTLKGTFYGNYKPRTDLPNVVEQYMKGELELEKFITHSIPFSEINKAFDYMLKGESIRCIIRMEE</sequence>
<keyword id="KW-0963">Cytoplasm</keyword>
<keyword id="KW-0479">Metal-binding</keyword>
<keyword id="KW-0520">NAD</keyword>
<keyword id="KW-0560">Oxidoreductase</keyword>
<keyword id="KW-0862">Zinc</keyword>
<evidence type="ECO:0000250" key="1">
    <source>
        <dbReference type="UniProtKB" id="P00327"/>
    </source>
</evidence>
<evidence type="ECO:0000250" key="2">
    <source>
        <dbReference type="UniProtKB" id="P06525"/>
    </source>
</evidence>
<evidence type="ECO:0000305" key="3"/>
<gene>
    <name type="primary">ADH1</name>
</gene>
<organism>
    <name type="scientific">Trifolium repens</name>
    <name type="common">Creeping white clover</name>
    <dbReference type="NCBI Taxonomy" id="3899"/>
    <lineage>
        <taxon>Eukaryota</taxon>
        <taxon>Viridiplantae</taxon>
        <taxon>Streptophyta</taxon>
        <taxon>Embryophyta</taxon>
        <taxon>Tracheophyta</taxon>
        <taxon>Spermatophyta</taxon>
        <taxon>Magnoliopsida</taxon>
        <taxon>eudicotyledons</taxon>
        <taxon>Gunneridae</taxon>
        <taxon>Pentapetalae</taxon>
        <taxon>rosids</taxon>
        <taxon>fabids</taxon>
        <taxon>Fabales</taxon>
        <taxon>Fabaceae</taxon>
        <taxon>Papilionoideae</taxon>
        <taxon>50 kb inversion clade</taxon>
        <taxon>NPAAA clade</taxon>
        <taxon>Hologalegina</taxon>
        <taxon>IRL clade</taxon>
        <taxon>Trifolieae</taxon>
        <taxon>Trifolium</taxon>
    </lineage>
</organism>
<accession>P13603</accession>
<reference key="1">
    <citation type="journal article" date="1990" name="Nucleic Acids Res.">
        <title>Nucleotide sequence of a white clover alcohol dehydrogenase cDNA.</title>
        <authorList>
            <person name="Ellison N.W."/>
            <person name="Yu P.L."/>
            <person name="White D.W.R."/>
        </authorList>
    </citation>
    <scope>NUCLEOTIDE SEQUENCE [MRNA]</scope>
    <source>
        <strain>cv. Huia</strain>
    </source>
</reference>
<dbReference type="EC" id="1.1.1.1" evidence="2"/>
<dbReference type="EMBL" id="X14826">
    <property type="protein sequence ID" value="CAA32934.1"/>
    <property type="molecule type" value="mRNA"/>
</dbReference>
<dbReference type="PIR" id="S14680">
    <property type="entry name" value="DEJYAW"/>
</dbReference>
<dbReference type="SMR" id="P13603"/>
<dbReference type="GO" id="GO:0005829">
    <property type="term" value="C:cytosol"/>
    <property type="evidence" value="ECO:0007669"/>
    <property type="project" value="TreeGrafter"/>
</dbReference>
<dbReference type="GO" id="GO:0004022">
    <property type="term" value="F:alcohol dehydrogenase (NAD+) activity"/>
    <property type="evidence" value="ECO:0007669"/>
    <property type="project" value="UniProtKB-EC"/>
</dbReference>
<dbReference type="GO" id="GO:0051903">
    <property type="term" value="F:S-(hydroxymethyl)glutathione dehydrogenase [NAD(P)+] activity"/>
    <property type="evidence" value="ECO:0007669"/>
    <property type="project" value="TreeGrafter"/>
</dbReference>
<dbReference type="GO" id="GO:0008270">
    <property type="term" value="F:zinc ion binding"/>
    <property type="evidence" value="ECO:0007669"/>
    <property type="project" value="InterPro"/>
</dbReference>
<dbReference type="GO" id="GO:0046294">
    <property type="term" value="P:formaldehyde catabolic process"/>
    <property type="evidence" value="ECO:0007669"/>
    <property type="project" value="TreeGrafter"/>
</dbReference>
<dbReference type="CDD" id="cd08301">
    <property type="entry name" value="alcohol_DH_plants"/>
    <property type="match status" value="1"/>
</dbReference>
<dbReference type="FunFam" id="3.90.180.10:FF:000067">
    <property type="entry name" value="alcohol dehydrogenase 1-like isoform X1"/>
    <property type="match status" value="1"/>
</dbReference>
<dbReference type="FunFam" id="3.40.50.720:FF:001292">
    <property type="entry name" value="Alcohol dehydrogenase class-P"/>
    <property type="match status" value="1"/>
</dbReference>
<dbReference type="Gene3D" id="3.90.180.10">
    <property type="entry name" value="Medium-chain alcohol dehydrogenases, catalytic domain"/>
    <property type="match status" value="1"/>
</dbReference>
<dbReference type="Gene3D" id="3.40.50.720">
    <property type="entry name" value="NAD(P)-binding Rossmann-like Domain"/>
    <property type="match status" value="1"/>
</dbReference>
<dbReference type="InterPro" id="IPR013149">
    <property type="entry name" value="ADH-like_C"/>
</dbReference>
<dbReference type="InterPro" id="IPR013154">
    <property type="entry name" value="ADH-like_N"/>
</dbReference>
<dbReference type="InterPro" id="IPR002328">
    <property type="entry name" value="ADH_Zn_CS"/>
</dbReference>
<dbReference type="InterPro" id="IPR011032">
    <property type="entry name" value="GroES-like_sf"/>
</dbReference>
<dbReference type="InterPro" id="IPR036291">
    <property type="entry name" value="NAD(P)-bd_dom_sf"/>
</dbReference>
<dbReference type="PANTHER" id="PTHR43880">
    <property type="entry name" value="ALCOHOL DEHYDROGENASE"/>
    <property type="match status" value="1"/>
</dbReference>
<dbReference type="PANTHER" id="PTHR43880:SF26">
    <property type="entry name" value="ALCOHOL DEHYDROGENASE CLASS-P"/>
    <property type="match status" value="1"/>
</dbReference>
<dbReference type="Pfam" id="PF08240">
    <property type="entry name" value="ADH_N"/>
    <property type="match status" value="1"/>
</dbReference>
<dbReference type="Pfam" id="PF00107">
    <property type="entry name" value="ADH_zinc_N"/>
    <property type="match status" value="1"/>
</dbReference>
<dbReference type="SUPFAM" id="SSF50129">
    <property type="entry name" value="GroES-like"/>
    <property type="match status" value="2"/>
</dbReference>
<dbReference type="SUPFAM" id="SSF51735">
    <property type="entry name" value="NAD(P)-binding Rossmann-fold domains"/>
    <property type="match status" value="1"/>
</dbReference>
<dbReference type="PROSITE" id="PS00059">
    <property type="entry name" value="ADH_ZINC"/>
    <property type="match status" value="1"/>
</dbReference>
<name>ADH1_TRIRP</name>
<comment type="catalytic activity">
    <reaction evidence="2">
        <text>a primary alcohol + NAD(+) = an aldehyde + NADH + H(+)</text>
        <dbReference type="Rhea" id="RHEA:10736"/>
        <dbReference type="ChEBI" id="CHEBI:15378"/>
        <dbReference type="ChEBI" id="CHEBI:15734"/>
        <dbReference type="ChEBI" id="CHEBI:17478"/>
        <dbReference type="ChEBI" id="CHEBI:57540"/>
        <dbReference type="ChEBI" id="CHEBI:57945"/>
        <dbReference type="EC" id="1.1.1.1"/>
    </reaction>
</comment>
<comment type="catalytic activity">
    <reaction evidence="2">
        <text>a secondary alcohol + NAD(+) = a ketone + NADH + H(+)</text>
        <dbReference type="Rhea" id="RHEA:10740"/>
        <dbReference type="ChEBI" id="CHEBI:15378"/>
        <dbReference type="ChEBI" id="CHEBI:17087"/>
        <dbReference type="ChEBI" id="CHEBI:35681"/>
        <dbReference type="ChEBI" id="CHEBI:57540"/>
        <dbReference type="ChEBI" id="CHEBI:57945"/>
        <dbReference type="EC" id="1.1.1.1"/>
    </reaction>
</comment>
<comment type="cofactor">
    <cofactor evidence="2">
        <name>Zn(2+)</name>
        <dbReference type="ChEBI" id="CHEBI:29105"/>
    </cofactor>
    <text evidence="2">Binds 2 Zn(2+) ions per subunit.</text>
</comment>
<comment type="subunit">
    <text evidence="2">Homodimer.</text>
</comment>
<comment type="subcellular location">
    <subcellularLocation>
        <location evidence="2">Cytoplasm</location>
    </subcellularLocation>
</comment>
<comment type="similarity">
    <text evidence="3">Belongs to the zinc-containing alcohol dehydrogenase family.</text>
</comment>
<protein>
    <recommendedName>
        <fullName>Alcohol dehydrogenase 1</fullName>
        <ecNumber evidence="2">1.1.1.1</ecNumber>
    </recommendedName>
</protein>
<proteinExistence type="evidence at transcript level"/>
<feature type="chain" id="PRO_0000160715" description="Alcohol dehydrogenase 1">
    <location>
        <begin position="1"/>
        <end position="380"/>
    </location>
</feature>
<feature type="binding site" evidence="2">
    <location>
        <position position="48"/>
    </location>
    <ligand>
        <name>Zn(2+)</name>
        <dbReference type="ChEBI" id="CHEBI:29105"/>
        <label>1</label>
        <note>catalytic</note>
    </ligand>
</feature>
<feature type="binding site" evidence="2">
    <location>
        <position position="50"/>
    </location>
    <ligand>
        <name>an alcohol</name>
        <dbReference type="ChEBI" id="CHEBI:30879"/>
    </ligand>
</feature>
<feature type="binding site" evidence="2">
    <location>
        <position position="50"/>
    </location>
    <ligand>
        <name>NAD(+)</name>
        <dbReference type="ChEBI" id="CHEBI:57540"/>
    </ligand>
</feature>
<feature type="binding site" evidence="2">
    <location>
        <position position="50"/>
    </location>
    <ligand>
        <name>Zn(2+)</name>
        <dbReference type="ChEBI" id="CHEBI:29105"/>
        <label>1</label>
        <note>catalytic</note>
    </ligand>
</feature>
<feature type="binding site" evidence="1">
    <location>
        <position position="70"/>
    </location>
    <ligand>
        <name>an alcohol</name>
        <dbReference type="ChEBI" id="CHEBI:30879"/>
    </ligand>
</feature>
<feature type="binding site" evidence="2">
    <location>
        <position position="70"/>
    </location>
    <ligand>
        <name>Zn(2+)</name>
        <dbReference type="ChEBI" id="CHEBI:29105"/>
        <label>1</label>
        <note>catalytic</note>
    </ligand>
</feature>
<feature type="binding site" evidence="2">
    <location>
        <position position="100"/>
    </location>
    <ligand>
        <name>Zn(2+)</name>
        <dbReference type="ChEBI" id="CHEBI:29105"/>
        <label>2</label>
    </ligand>
</feature>
<feature type="binding site" evidence="2">
    <location>
        <position position="103"/>
    </location>
    <ligand>
        <name>Zn(2+)</name>
        <dbReference type="ChEBI" id="CHEBI:29105"/>
        <label>2</label>
    </ligand>
</feature>
<feature type="binding site" evidence="2">
    <location>
        <position position="106"/>
    </location>
    <ligand>
        <name>Zn(2+)</name>
        <dbReference type="ChEBI" id="CHEBI:29105"/>
        <label>2</label>
    </ligand>
</feature>
<feature type="binding site" evidence="2">
    <location>
        <position position="114"/>
    </location>
    <ligand>
        <name>Zn(2+)</name>
        <dbReference type="ChEBI" id="CHEBI:29105"/>
        <label>2</label>
    </ligand>
</feature>
<feature type="binding site" evidence="2">
    <location>
        <position position="178"/>
    </location>
    <ligand>
        <name>Zn(2+)</name>
        <dbReference type="ChEBI" id="CHEBI:29105"/>
        <label>1</label>
        <note>catalytic</note>
    </ligand>
</feature>
<feature type="binding site" evidence="2">
    <location>
        <begin position="203"/>
        <end position="208"/>
    </location>
    <ligand>
        <name>NAD(+)</name>
        <dbReference type="ChEBI" id="CHEBI:57540"/>
    </ligand>
</feature>
<feature type="binding site" evidence="2">
    <location>
        <position position="227"/>
    </location>
    <ligand>
        <name>NAD(+)</name>
        <dbReference type="ChEBI" id="CHEBI:57540"/>
    </ligand>
</feature>
<feature type="binding site" evidence="2">
    <location>
        <position position="232"/>
    </location>
    <ligand>
        <name>NAD(+)</name>
        <dbReference type="ChEBI" id="CHEBI:57540"/>
    </ligand>
</feature>
<feature type="binding site" evidence="2">
    <location>
        <position position="273"/>
    </location>
    <ligand>
        <name>NAD(+)</name>
        <dbReference type="ChEBI" id="CHEBI:57540"/>
    </ligand>
</feature>
<feature type="binding site" evidence="1">
    <location>
        <begin position="296"/>
        <end position="298"/>
    </location>
    <ligand>
        <name>NAD(+)</name>
        <dbReference type="ChEBI" id="CHEBI:57540"/>
    </ligand>
</feature>
<feature type="binding site" evidence="2">
    <location>
        <position position="296"/>
    </location>
    <ligand>
        <name>NAD(+)</name>
        <dbReference type="ChEBI" id="CHEBI:57540"/>
    </ligand>
</feature>
<feature type="binding site" evidence="2">
    <location>
        <position position="373"/>
    </location>
    <ligand>
        <name>NAD(+)</name>
        <dbReference type="ChEBI" id="CHEBI:57540"/>
    </ligand>
</feature>